<dbReference type="EC" id="1.3.1.-" evidence="6"/>
<dbReference type="EC" id="1.7.1.-" evidence="3"/>
<dbReference type="EMBL" id="FR796444">
    <property type="protein sequence ID" value="CBZ08477.1"/>
    <property type="molecule type" value="Genomic_DNA"/>
</dbReference>
<dbReference type="RefSeq" id="XP_003392329.1">
    <property type="nucleotide sequence ID" value="XM_003392281.1"/>
</dbReference>
<dbReference type="SMR" id="E9AGH7"/>
<dbReference type="FunCoup" id="E9AGH7">
    <property type="interactions" value="137"/>
</dbReference>
<dbReference type="STRING" id="5671.E9AGH7"/>
<dbReference type="GeneID" id="10966078"/>
<dbReference type="KEGG" id="lif:LINJ.12.0730"/>
<dbReference type="VEuPathDB" id="TriTrypDB:LINF_120015500"/>
<dbReference type="eggNOG" id="KOG0134">
    <property type="taxonomic scope" value="Eukaryota"/>
</dbReference>
<dbReference type="InParanoid" id="E9AGH7"/>
<dbReference type="OMA" id="GKGPVGY"/>
<dbReference type="Proteomes" id="UP000008153">
    <property type="component" value="Chromosome 12"/>
</dbReference>
<dbReference type="GO" id="GO:0005829">
    <property type="term" value="C:cytosol"/>
    <property type="evidence" value="ECO:0000314"/>
    <property type="project" value="UniProtKB"/>
</dbReference>
<dbReference type="GO" id="GO:0010181">
    <property type="term" value="F:FMN binding"/>
    <property type="evidence" value="ECO:0007669"/>
    <property type="project" value="InterPro"/>
</dbReference>
<dbReference type="GO" id="GO:0016628">
    <property type="term" value="F:oxidoreductase activity, acting on the CH-CH group of donors, NAD or NADP as acceptor"/>
    <property type="evidence" value="ECO:0000314"/>
    <property type="project" value="UniProtKB"/>
</dbReference>
<dbReference type="CDD" id="cd02933">
    <property type="entry name" value="OYE_like_FMN"/>
    <property type="match status" value="1"/>
</dbReference>
<dbReference type="FunFam" id="3.20.20.70:FF:000059">
    <property type="entry name" value="N-ethylmaleimide reductase, FMN-linked"/>
    <property type="match status" value="1"/>
</dbReference>
<dbReference type="Gene3D" id="3.20.20.70">
    <property type="entry name" value="Aldolase class I"/>
    <property type="match status" value="1"/>
</dbReference>
<dbReference type="InterPro" id="IPR013785">
    <property type="entry name" value="Aldolase_TIM"/>
</dbReference>
<dbReference type="InterPro" id="IPR001155">
    <property type="entry name" value="OxRdtase_FMN_N"/>
</dbReference>
<dbReference type="InterPro" id="IPR045247">
    <property type="entry name" value="Oye-like"/>
</dbReference>
<dbReference type="PANTHER" id="PTHR22893">
    <property type="entry name" value="NADH OXIDOREDUCTASE-RELATED"/>
    <property type="match status" value="1"/>
</dbReference>
<dbReference type="PANTHER" id="PTHR22893:SF91">
    <property type="entry name" value="NADPH DEHYDROGENASE 2-RELATED"/>
    <property type="match status" value="1"/>
</dbReference>
<dbReference type="Pfam" id="PF00724">
    <property type="entry name" value="Oxidored_FMN"/>
    <property type="match status" value="1"/>
</dbReference>
<dbReference type="SUPFAM" id="SSF51395">
    <property type="entry name" value="FMN-linked oxidoreductases"/>
    <property type="match status" value="1"/>
</dbReference>
<protein>
    <recommendedName>
        <fullName evidence="6">Probable flavin mononucleotide-dependent alkene reductase</fullName>
        <ecNumber evidence="6">1.3.1.-</ecNumber>
    </recommendedName>
    <alternativeName>
        <fullName evidence="4">Flavin mononucleotide-dependent nitroreductase</fullName>
        <ecNumber evidence="3">1.7.1.-</ecNumber>
    </alternativeName>
    <alternativeName>
        <fullName evidence="4">NTR2</fullName>
    </alternativeName>
</protein>
<evidence type="ECO:0000250" key="1">
    <source>
        <dbReference type="UniProtKB" id="P42593"/>
    </source>
</evidence>
<evidence type="ECO:0000250" key="2">
    <source>
        <dbReference type="UniProtKB" id="Q9FUP0"/>
    </source>
</evidence>
<evidence type="ECO:0000269" key="3">
    <source>
    </source>
</evidence>
<evidence type="ECO:0000303" key="4">
    <source>
    </source>
</evidence>
<evidence type="ECO:0000305" key="5"/>
<evidence type="ECO:0000305" key="6">
    <source>
    </source>
</evidence>
<evidence type="ECO:0000312" key="7">
    <source>
        <dbReference type="EMBL" id="CBZ08477.1"/>
    </source>
</evidence>
<gene>
    <name evidence="7" type="ORF">LINJ.12.0730</name>
</gene>
<comment type="function">
    <text evidence="6">May function as a flavin mononucleotide (FMN)-dependent alkene reductase on substrates carrying alpha,beta-unsaturated carbonyl groups (ketones, aldehydes, carboxylic acids, esters, lactones or cyclic imides). The catalysis depends on NAD(P)H, which acts as a hydride donor for the reduction. Seems to be involved in metabolic pathways required for efficient replication of amastigotes within macrophages.</text>
</comment>
<comment type="function">
    <text evidence="3">Acts as a FMN-dependent nitroreductase that activates anti-leishmanial bicyclic nitroaromatic prodrugs including delamanid, DNDI-VL-2098 and (R)-PA-824, forming toxic products that kill the parasites.</text>
</comment>
<comment type="cofactor">
    <cofactor evidence="3">
        <name>FMN</name>
        <dbReference type="ChEBI" id="CHEBI:58210"/>
    </cofactor>
</comment>
<comment type="subunit">
    <text evidence="3">Monomer.</text>
</comment>
<comment type="subcellular location">
    <subcellularLocation>
        <location evidence="3">Cytoplasm</location>
        <location evidence="3">Cytosol</location>
    </subcellularLocation>
</comment>
<comment type="developmental stage">
    <text evidence="3">Detected in all developmental stages: log phase promastigotes, metacyclic promastigotes and axenic amastigotes.</text>
</comment>
<comment type="disruption phenotype">
    <text evidence="3">Knockout parasites show reduced replication within macrophages, but are resistant to bicyclic nitro-drugs including delamanid and DNDI-VL-2098. Sensitivity to bicyclic nitro-drugs is fully restored on expression of this reductase.</text>
</comment>
<comment type="similarity">
    <text evidence="5">Belongs to the NADH:flavin oxidoreductase/NADH oxidase family.</text>
</comment>
<organism>
    <name type="scientific">Leishmania infantum</name>
    <dbReference type="NCBI Taxonomy" id="5671"/>
    <lineage>
        <taxon>Eukaryota</taxon>
        <taxon>Discoba</taxon>
        <taxon>Euglenozoa</taxon>
        <taxon>Kinetoplastea</taxon>
        <taxon>Metakinetoplastina</taxon>
        <taxon>Trypanosomatida</taxon>
        <taxon>Trypanosomatidae</taxon>
        <taxon>Leishmaniinae</taxon>
        <taxon>Leishmania</taxon>
    </lineage>
</organism>
<keyword id="KW-0963">Cytoplasm</keyword>
<keyword id="KW-0285">Flavoprotein</keyword>
<keyword id="KW-0288">FMN</keyword>
<keyword id="KW-0520">NAD</keyword>
<keyword id="KW-0521">NADP</keyword>
<keyword id="KW-0560">Oxidoreductase</keyword>
<keyword id="KW-1185">Reference proteome</keyword>
<name>NTR2_LEIIN</name>
<sequence>MSAASKSIDVMLKPLLVGGRPISNRFVMAPLTRCRADDNHVPTAAMVKHYSDRASMGLIITEATQIQKGYSTFAHEGGIYDKEHVDGWRKVTDAVHDKGGIIFCQIHNGGRSTVPSNVDEGVRIVAPSAVAITGHKCAGSFARNGKTQPYPVPHAMAAEEIASYVNLYAAAARNAIAAGFDGVEVHGANGYLIDQFLKTSSNQRTDEYGGSIENRCRFLFEVLDAVIQAIGRERVGLRISPLNSFNDQSDEDPQALTRYICSQLNLRTIAFLDVMRGDFFSPARGADKWAREEYEGVLFTGMSFEIEEAAKAVESGAADAVVFGTKALANPDLVARAVAGAPLNKPDPATFYTTGEAGYNDYPFM</sequence>
<accession>E9AGH7</accession>
<feature type="chain" id="PRO_0000444985" description="Probable flavin mononucleotide-dependent alkene reductase">
    <location>
        <begin position="1"/>
        <end position="365"/>
    </location>
</feature>
<feature type="active site" description="Proton donor" evidence="1">
    <location>
        <position position="191"/>
    </location>
</feature>
<feature type="binding site" evidence="2">
    <location>
        <begin position="30"/>
        <end position="32"/>
    </location>
    <ligand>
        <name>FMN</name>
        <dbReference type="ChEBI" id="CHEBI:58210"/>
    </ligand>
</feature>
<feature type="binding site" evidence="2">
    <location>
        <position position="63"/>
    </location>
    <ligand>
        <name>FMN</name>
        <dbReference type="ChEBI" id="CHEBI:58210"/>
    </ligand>
</feature>
<feature type="binding site" evidence="2">
    <location>
        <position position="105"/>
    </location>
    <ligand>
        <name>FMN</name>
        <dbReference type="ChEBI" id="CHEBI:58210"/>
    </ligand>
</feature>
<feature type="binding site" evidence="2">
    <location>
        <position position="238"/>
    </location>
    <ligand>
        <name>FMN</name>
        <dbReference type="ChEBI" id="CHEBI:58210"/>
    </ligand>
</feature>
<feature type="binding site" evidence="2">
    <location>
        <position position="303"/>
    </location>
    <ligand>
        <name>FMN</name>
        <dbReference type="ChEBI" id="CHEBI:58210"/>
    </ligand>
</feature>
<feature type="binding site" evidence="2">
    <location>
        <begin position="324"/>
        <end position="325"/>
    </location>
    <ligand>
        <name>FMN</name>
        <dbReference type="ChEBI" id="CHEBI:58210"/>
    </ligand>
</feature>
<proteinExistence type="evidence at protein level"/>
<reference key="1">
    <citation type="journal article" date="2007" name="Nat. Genet.">
        <title>Comparative genomic analysis of three Leishmania species that cause diverse human disease.</title>
        <authorList>
            <person name="Peacock C.S."/>
            <person name="Seeger K."/>
            <person name="Harris D."/>
            <person name="Murphy L."/>
            <person name="Ruiz J.C."/>
            <person name="Quail M.A."/>
            <person name="Peters N."/>
            <person name="Adlem E."/>
            <person name="Tivey A."/>
            <person name="Aslett M."/>
            <person name="Kerhornou A."/>
            <person name="Ivens A."/>
            <person name="Fraser A."/>
            <person name="Rajandream M.-A."/>
            <person name="Carver T."/>
            <person name="Norbertczak H."/>
            <person name="Chillingworth T."/>
            <person name="Hance Z."/>
            <person name="Jagels K."/>
            <person name="Moule S."/>
            <person name="Ormond D."/>
            <person name="Rutter S."/>
            <person name="Sqaures R."/>
            <person name="Whitehead S."/>
            <person name="Rabbinowitsch E."/>
            <person name="Arrowsmith C."/>
            <person name="White B."/>
            <person name="Thurston S."/>
            <person name="Bringaud F."/>
            <person name="Baldauf S.L."/>
            <person name="Faulconbridge A."/>
            <person name="Jeffares D."/>
            <person name="Depledge D.P."/>
            <person name="Oyola S.O."/>
            <person name="Hilley J.D."/>
            <person name="Brito L.O."/>
            <person name="Tosi L.R.O."/>
            <person name="Barrell B."/>
            <person name="Cruz A.K."/>
            <person name="Mottram J.C."/>
            <person name="Smith D.F."/>
            <person name="Berriman M."/>
        </authorList>
    </citation>
    <scope>NUCLEOTIDE SEQUENCE [LARGE SCALE GENOMIC DNA]</scope>
    <source>
        <strain>JPCM5</strain>
    </source>
</reference>
<reference key="2">
    <citation type="journal article" date="2016" name="PLoS Pathog.">
        <title>Activation of bicyclic nitro-drugs by a novel nitroreductase (NTR2) in Leishmania.</title>
        <authorList>
            <person name="Wyllie S."/>
            <person name="Roberts A.J."/>
            <person name="Norval S."/>
            <person name="Patterson S."/>
            <person name="Foth B.J."/>
            <person name="Berriman M."/>
            <person name="Read K.D."/>
            <person name="Fairlamb A.H."/>
        </authorList>
    </citation>
    <scope>FUNCTION AS A NITROREDUCTASE</scope>
    <scope>COFACTOR</scope>
    <scope>SUBCELLULAR LOCATION</scope>
    <scope>DEVELOPMENTAL STAGE</scope>
    <scope>DISRUPTION PHENOTYPE</scope>
    <scope>SUBUNIT</scope>
    <scope>IDENTIFICATION BY MASS SPECTROMETRY</scope>
</reference>